<sequence>MAEEKKLKLSNTVLPSESMKVVAESMGIAQIQEETCQLLTDEVSYRIKEIAQDALKFMHMGKRQKLTTSDIDYALKLKNVEPLYGFHAQEFIPFRFASGGGRELYFYEEKEVDLSDIINTPLPRVPLDVCLKAHWLSIEGCQPAIPENPPPAPKEQQKAEATEPLKSAKPGQEEDGPLKGKGQGAAAADGKGKEKKAPPLLEGAPFRLKPRSIHELSVEQQLYYKEITEACVGSCEAKRAEALQSIATDPGLYQMLPRFSTFISEGVRVNVVQNNLALLIYLMRMVKALMDNPTLYLEKYVHELIPAVMTCIVSRQLCLRPDVDNHWALRDFAARLVAQICKHFSTTTNNIQSRITKTFTKSWVDEKTPWTTRYGSIAGLAELGHDVIKTLILPRLQQEGERIRSVLDGPVLSNIDRIGADHVQSLLLKHCAPVLAKLRPPPDNQDAYRGEFGSLGPLLCSHVVKARAQAALQAQQVNRTTLTITQPRPTLTLSQAPQPGPRTPGLLKVPGSIALPVQTLVSARAAAPPQPSPPPTKFIVMSSSSSASSTQQVLSLSTSAPGSGSTTTSPVTTTVPSVQPIVKLVSTATTAPPSTAPAGSGSVQKYIVVSLPPTGEGKGGPPSHPSPVPPSSSSPSPLGGSTLCGGKQEAGDSPPPAPGTPKANGSQPTGPGSPQPAL</sequence>
<feature type="chain" id="PRO_0000118874" description="Transcription initiation factor TFIID subunit 6">
    <location>
        <begin position="1"/>
        <end position="678"/>
    </location>
</feature>
<feature type="region of interest" description="Disordered" evidence="3">
    <location>
        <begin position="142"/>
        <end position="201"/>
    </location>
</feature>
<feature type="region of interest" description="Disordered" evidence="3">
    <location>
        <begin position="524"/>
        <end position="574"/>
    </location>
</feature>
<feature type="region of interest" description="Disordered" evidence="3">
    <location>
        <begin position="611"/>
        <end position="678"/>
    </location>
</feature>
<feature type="compositionally biased region" description="Low complexity" evidence="3">
    <location>
        <begin position="542"/>
        <end position="574"/>
    </location>
</feature>
<feature type="compositionally biased region" description="Pro residues" evidence="3">
    <location>
        <begin position="622"/>
        <end position="632"/>
    </location>
</feature>
<feature type="compositionally biased region" description="Low complexity" evidence="3">
    <location>
        <begin position="633"/>
        <end position="646"/>
    </location>
</feature>
<feature type="modified residue" description="Phosphothreonine" evidence="1">
    <location>
        <position position="120"/>
    </location>
</feature>
<feature type="modified residue" description="Phosphothreonine" evidence="2">
    <location>
        <position position="248"/>
    </location>
</feature>
<feature type="modified residue" description="Phosphotyrosine" evidence="2">
    <location>
        <position position="253"/>
    </location>
</feature>
<feature type="modified residue" description="Phosphoserine" evidence="2">
    <location>
        <position position="264"/>
    </location>
</feature>
<feature type="modified residue" description="Omega-N-methylarginine" evidence="6">
    <location>
        <position position="524"/>
    </location>
</feature>
<feature type="modified residue" description="Phosphoserine" evidence="5">
    <location>
        <position position="626"/>
    </location>
</feature>
<feature type="modified residue" description="Phosphoserine" evidence="5">
    <location>
        <position position="634"/>
    </location>
</feature>
<feature type="modified residue" description="Phosphoserine" evidence="1">
    <location>
        <position position="636"/>
    </location>
</feature>
<feature type="modified residue" description="Phosphoserine" evidence="5">
    <location>
        <position position="653"/>
    </location>
</feature>
<feature type="modified residue" description="Phosphothreonine" evidence="5">
    <location>
        <position position="660"/>
    </location>
</feature>
<feature type="cross-link" description="Glycyl lysine isopeptide (Lys-Gly) (interchain with G-Cter in SUMO2)" evidence="1">
    <location>
        <position position="196"/>
    </location>
</feature>
<name>TAF6_MOUSE</name>
<organism>
    <name type="scientific">Mus musculus</name>
    <name type="common">Mouse</name>
    <dbReference type="NCBI Taxonomy" id="10090"/>
    <lineage>
        <taxon>Eukaryota</taxon>
        <taxon>Metazoa</taxon>
        <taxon>Chordata</taxon>
        <taxon>Craniata</taxon>
        <taxon>Vertebrata</taxon>
        <taxon>Euteleostomi</taxon>
        <taxon>Mammalia</taxon>
        <taxon>Eutheria</taxon>
        <taxon>Euarchontoglires</taxon>
        <taxon>Glires</taxon>
        <taxon>Rodentia</taxon>
        <taxon>Myomorpha</taxon>
        <taxon>Muroidea</taxon>
        <taxon>Muridae</taxon>
        <taxon>Murinae</taxon>
        <taxon>Mus</taxon>
        <taxon>Mus</taxon>
    </lineage>
</organism>
<evidence type="ECO:0000250" key="1">
    <source>
        <dbReference type="UniProtKB" id="P49848"/>
    </source>
</evidence>
<evidence type="ECO:0000250" key="2">
    <source>
        <dbReference type="UniProtKB" id="Q63801"/>
    </source>
</evidence>
<evidence type="ECO:0000256" key="3">
    <source>
        <dbReference type="SAM" id="MobiDB-lite"/>
    </source>
</evidence>
<evidence type="ECO:0000305" key="4"/>
<evidence type="ECO:0007744" key="5">
    <source>
    </source>
</evidence>
<evidence type="ECO:0007744" key="6">
    <source>
    </source>
</evidence>
<gene>
    <name type="primary">Taf6</name>
    <name type="synonym">Taf2e</name>
</gene>
<dbReference type="EMBL" id="D49439">
    <property type="protein sequence ID" value="BAA08417.1"/>
    <property type="molecule type" value="mRNA"/>
</dbReference>
<dbReference type="EMBL" id="BC058583">
    <property type="protein sequence ID" value="AAH58583.1"/>
    <property type="molecule type" value="mRNA"/>
</dbReference>
<dbReference type="CCDS" id="CCDS19795.1"/>
<dbReference type="PIR" id="JC4245">
    <property type="entry name" value="JC4245"/>
</dbReference>
<dbReference type="RefSeq" id="NP_001343529.1">
    <property type="nucleotide sequence ID" value="NM_001356600.2"/>
</dbReference>
<dbReference type="RefSeq" id="NP_001343530.1">
    <property type="nucleotide sequence ID" value="NM_001356601.2"/>
</dbReference>
<dbReference type="RefSeq" id="NP_001343531.1">
    <property type="nucleotide sequence ID" value="NM_001356602.2"/>
</dbReference>
<dbReference type="RefSeq" id="NP_033341.1">
    <property type="nucleotide sequence ID" value="NM_009315.5"/>
</dbReference>
<dbReference type="RefSeq" id="XP_017176274.1">
    <property type="nucleotide sequence ID" value="XM_017320785.1"/>
</dbReference>
<dbReference type="RefSeq" id="XP_017176275.1">
    <property type="nucleotide sequence ID" value="XM_017320786.1"/>
</dbReference>
<dbReference type="RefSeq" id="XP_030110213.1">
    <property type="nucleotide sequence ID" value="XM_030254353.2"/>
</dbReference>
<dbReference type="RefSeq" id="XP_030110214.1">
    <property type="nucleotide sequence ID" value="XM_030254354.2"/>
</dbReference>
<dbReference type="SMR" id="Q62311"/>
<dbReference type="BioGRID" id="203959">
    <property type="interactions" value="5"/>
</dbReference>
<dbReference type="ComplexPortal" id="CPX-916">
    <property type="entry name" value="TFTC histone acetylation complex"/>
</dbReference>
<dbReference type="ComplexPortal" id="CPX-932">
    <property type="entry name" value="General transcription factor complex TFIID"/>
</dbReference>
<dbReference type="ComplexPortal" id="CPX-959">
    <property type="entry name" value="General transcription factor complex TFIID, Taf4b variant"/>
</dbReference>
<dbReference type="CORUM" id="Q62311"/>
<dbReference type="DIP" id="DIP-493N"/>
<dbReference type="FunCoup" id="Q62311">
    <property type="interactions" value="3228"/>
</dbReference>
<dbReference type="IntAct" id="Q62311">
    <property type="interactions" value="3"/>
</dbReference>
<dbReference type="MINT" id="Q62311"/>
<dbReference type="STRING" id="10090.ENSMUSP00000106561"/>
<dbReference type="GlyGen" id="Q62311">
    <property type="glycosylation" value="6 sites, 1 O-linked glycan (6 sites)"/>
</dbReference>
<dbReference type="iPTMnet" id="Q62311"/>
<dbReference type="PhosphoSitePlus" id="Q62311"/>
<dbReference type="SwissPalm" id="Q62311"/>
<dbReference type="jPOST" id="Q62311"/>
<dbReference type="PaxDb" id="10090-ENSMUSP00000048016"/>
<dbReference type="PeptideAtlas" id="Q62311"/>
<dbReference type="ProteomicsDB" id="254815"/>
<dbReference type="Pumba" id="Q62311"/>
<dbReference type="Antibodypedia" id="1765">
    <property type="antibodies" value="200 antibodies from 23 providers"/>
</dbReference>
<dbReference type="DNASU" id="21343"/>
<dbReference type="Ensembl" id="ENSMUST00000048698.14">
    <property type="protein sequence ID" value="ENSMUSP00000048016.8"/>
    <property type="gene ID" value="ENSMUSG00000036980.14"/>
</dbReference>
<dbReference type="Ensembl" id="ENSMUST00000110936.8">
    <property type="protein sequence ID" value="ENSMUSP00000106561.2"/>
    <property type="gene ID" value="ENSMUSG00000036980.14"/>
</dbReference>
<dbReference type="GeneID" id="21343"/>
<dbReference type="KEGG" id="mmu:21343"/>
<dbReference type="UCSC" id="uc009aew.1">
    <property type="organism name" value="mouse"/>
</dbReference>
<dbReference type="AGR" id="MGI:109129"/>
<dbReference type="CTD" id="6878"/>
<dbReference type="MGI" id="MGI:109129">
    <property type="gene designation" value="Taf6"/>
</dbReference>
<dbReference type="VEuPathDB" id="HostDB:ENSMUSG00000036980"/>
<dbReference type="eggNOG" id="KOG2549">
    <property type="taxonomic scope" value="Eukaryota"/>
</dbReference>
<dbReference type="GeneTree" id="ENSGT00640000091486"/>
<dbReference type="HOGENOM" id="CLU_021711_2_1_1"/>
<dbReference type="InParanoid" id="Q62311"/>
<dbReference type="OMA" id="MPEETCQ"/>
<dbReference type="OrthoDB" id="361039at2759"/>
<dbReference type="PhylomeDB" id="Q62311"/>
<dbReference type="TreeFam" id="TF313632"/>
<dbReference type="Reactome" id="R-MMU-674695">
    <property type="pathway name" value="RNA Polymerase II Pre-transcription Events"/>
</dbReference>
<dbReference type="Reactome" id="R-MMU-6804756">
    <property type="pathway name" value="Regulation of TP53 Activity through Phosphorylation"/>
</dbReference>
<dbReference type="Reactome" id="R-MMU-6807505">
    <property type="pathway name" value="RNA polymerase II transcribes snRNA genes"/>
</dbReference>
<dbReference type="Reactome" id="R-MMU-73776">
    <property type="pathway name" value="RNA Polymerase II Promoter Escape"/>
</dbReference>
<dbReference type="Reactome" id="R-MMU-73779">
    <property type="pathway name" value="RNA Polymerase II Transcription Pre-Initiation And Promoter Opening"/>
</dbReference>
<dbReference type="Reactome" id="R-MMU-75953">
    <property type="pathway name" value="RNA Polymerase II Transcription Initiation"/>
</dbReference>
<dbReference type="Reactome" id="R-MMU-76042">
    <property type="pathway name" value="RNA Polymerase II Transcription Initiation And Promoter Clearance"/>
</dbReference>
<dbReference type="BioGRID-ORCS" id="21343">
    <property type="hits" value="23 hits in 83 CRISPR screens"/>
</dbReference>
<dbReference type="ChiTaRS" id="Taf6">
    <property type="organism name" value="mouse"/>
</dbReference>
<dbReference type="PRO" id="PR:Q62311"/>
<dbReference type="Proteomes" id="UP000000589">
    <property type="component" value="Chromosome 5"/>
</dbReference>
<dbReference type="RNAct" id="Q62311">
    <property type="molecule type" value="protein"/>
</dbReference>
<dbReference type="Bgee" id="ENSMUSG00000036980">
    <property type="expression patterns" value="Expressed in undifferentiated genital tubercle and 241 other cell types or tissues"/>
</dbReference>
<dbReference type="ExpressionAtlas" id="Q62311">
    <property type="expression patterns" value="baseline and differential"/>
</dbReference>
<dbReference type="GO" id="GO:0005829">
    <property type="term" value="C:cytosol"/>
    <property type="evidence" value="ECO:0007669"/>
    <property type="project" value="Ensembl"/>
</dbReference>
<dbReference type="GO" id="GO:0071339">
    <property type="term" value="C:MLL1 complex"/>
    <property type="evidence" value="ECO:0000250"/>
    <property type="project" value="UniProtKB"/>
</dbReference>
<dbReference type="GO" id="GO:0005634">
    <property type="term" value="C:nucleus"/>
    <property type="evidence" value="ECO:0000314"/>
    <property type="project" value="MGI"/>
</dbReference>
<dbReference type="GO" id="GO:0000124">
    <property type="term" value="C:SAGA complex"/>
    <property type="evidence" value="ECO:0007669"/>
    <property type="project" value="InterPro"/>
</dbReference>
<dbReference type="GO" id="GO:0046695">
    <property type="term" value="C:SLIK (SAGA-like) complex"/>
    <property type="evidence" value="ECO:0007669"/>
    <property type="project" value="InterPro"/>
</dbReference>
<dbReference type="GO" id="GO:0005669">
    <property type="term" value="C:transcription factor TFIID complex"/>
    <property type="evidence" value="ECO:0000266"/>
    <property type="project" value="MGI"/>
</dbReference>
<dbReference type="GO" id="GO:0033276">
    <property type="term" value="C:transcription factor TFTC complex"/>
    <property type="evidence" value="ECO:0000303"/>
    <property type="project" value="ComplexPortal"/>
</dbReference>
<dbReference type="GO" id="GO:0017162">
    <property type="term" value="F:aryl hydrocarbon receptor binding"/>
    <property type="evidence" value="ECO:0007669"/>
    <property type="project" value="Ensembl"/>
</dbReference>
<dbReference type="GO" id="GO:0003677">
    <property type="term" value="F:DNA binding"/>
    <property type="evidence" value="ECO:0000314"/>
    <property type="project" value="MGI"/>
</dbReference>
<dbReference type="GO" id="GO:0046982">
    <property type="term" value="F:protein heterodimerization activity"/>
    <property type="evidence" value="ECO:0007669"/>
    <property type="project" value="InterPro"/>
</dbReference>
<dbReference type="GO" id="GO:0016251">
    <property type="term" value="F:RNA polymerase II general transcription initiation factor activity"/>
    <property type="evidence" value="ECO:0007669"/>
    <property type="project" value="Ensembl"/>
</dbReference>
<dbReference type="GO" id="GO:0042789">
    <property type="term" value="P:mRNA transcription by RNA polymerase II"/>
    <property type="evidence" value="ECO:0000266"/>
    <property type="project" value="ComplexPortal"/>
</dbReference>
<dbReference type="GO" id="GO:0045786">
    <property type="term" value="P:negative regulation of cell cycle"/>
    <property type="evidence" value="ECO:0007669"/>
    <property type="project" value="Ensembl"/>
</dbReference>
<dbReference type="GO" id="GO:0045893">
    <property type="term" value="P:positive regulation of DNA-templated transcription"/>
    <property type="evidence" value="ECO:0000303"/>
    <property type="project" value="ComplexPortal"/>
</dbReference>
<dbReference type="GO" id="GO:0060261">
    <property type="term" value="P:positive regulation of transcription initiation by RNA polymerase II"/>
    <property type="evidence" value="ECO:0000266"/>
    <property type="project" value="ComplexPortal"/>
</dbReference>
<dbReference type="GO" id="GO:0006282">
    <property type="term" value="P:regulation of DNA repair"/>
    <property type="evidence" value="ECO:0000303"/>
    <property type="project" value="ComplexPortal"/>
</dbReference>
<dbReference type="GO" id="GO:0006357">
    <property type="term" value="P:regulation of transcription by RNA polymerase II"/>
    <property type="evidence" value="ECO:0000266"/>
    <property type="project" value="ComplexPortal"/>
</dbReference>
<dbReference type="GO" id="GO:0051123">
    <property type="term" value="P:RNA polymerase II preinitiation complex assembly"/>
    <property type="evidence" value="ECO:0000266"/>
    <property type="project" value="ComplexPortal"/>
</dbReference>
<dbReference type="CDD" id="cd22931">
    <property type="entry name" value="HFD_TAF6"/>
    <property type="match status" value="1"/>
</dbReference>
<dbReference type="CDD" id="cd08050">
    <property type="entry name" value="TAF6C"/>
    <property type="match status" value="1"/>
</dbReference>
<dbReference type="FunFam" id="1.10.20.10:FF:000030">
    <property type="entry name" value="Transcription initiation factor TFIID subunit 6"/>
    <property type="match status" value="1"/>
</dbReference>
<dbReference type="FunFam" id="1.25.40.770:FF:000001">
    <property type="entry name" value="Transcription initiation factor TFIID subunit 6"/>
    <property type="match status" value="1"/>
</dbReference>
<dbReference type="Gene3D" id="1.10.20.10">
    <property type="entry name" value="Histone, subunit A"/>
    <property type="match status" value="1"/>
</dbReference>
<dbReference type="Gene3D" id="1.25.40.770">
    <property type="entry name" value="TAF6, C-terminal HEAT repeat domain"/>
    <property type="match status" value="1"/>
</dbReference>
<dbReference type="InterPro" id="IPR016024">
    <property type="entry name" value="ARM-type_fold"/>
</dbReference>
<dbReference type="InterPro" id="IPR009072">
    <property type="entry name" value="Histone-fold"/>
</dbReference>
<dbReference type="InterPro" id="IPR037796">
    <property type="entry name" value="TAF6"/>
</dbReference>
<dbReference type="InterPro" id="IPR011442">
    <property type="entry name" value="TAF6_C"/>
</dbReference>
<dbReference type="InterPro" id="IPR046344">
    <property type="entry name" value="TAF6_C_sf"/>
</dbReference>
<dbReference type="InterPro" id="IPR004823">
    <property type="entry name" value="TAF_TATA-bd_Histone-like_dom"/>
</dbReference>
<dbReference type="PANTHER" id="PTHR10221">
    <property type="entry name" value="TRANSCRIPTION INITIATION FACTOR TFIID SUBUNIT 6"/>
    <property type="match status" value="1"/>
</dbReference>
<dbReference type="PANTHER" id="PTHR10221:SF9">
    <property type="entry name" value="TRANSCRIPTION INITIATION FACTOR TFIID SUBUNIT 6"/>
    <property type="match status" value="1"/>
</dbReference>
<dbReference type="Pfam" id="PF02969">
    <property type="entry name" value="TAF"/>
    <property type="match status" value="1"/>
</dbReference>
<dbReference type="Pfam" id="PF07571">
    <property type="entry name" value="TAF6_C"/>
    <property type="match status" value="1"/>
</dbReference>
<dbReference type="SMART" id="SM00803">
    <property type="entry name" value="TAF"/>
    <property type="match status" value="1"/>
</dbReference>
<dbReference type="SUPFAM" id="SSF48371">
    <property type="entry name" value="ARM repeat"/>
    <property type="match status" value="1"/>
</dbReference>
<dbReference type="SUPFAM" id="SSF47113">
    <property type="entry name" value="Histone-fold"/>
    <property type="match status" value="1"/>
</dbReference>
<reference key="1">
    <citation type="journal article" date="1995" name="Gene">
        <title>Isolation of a cDNA encoding a mouse TFIID subunit containing histone H4 homology.</title>
        <authorList>
            <person name="Umehara T."/>
            <person name="Kida S."/>
            <person name="Horikoshi M."/>
        </authorList>
    </citation>
    <scope>NUCLEOTIDE SEQUENCE [MRNA]</scope>
</reference>
<reference key="2">
    <citation type="journal article" date="2004" name="Genome Res.">
        <title>The status, quality, and expansion of the NIH full-length cDNA project: the Mammalian Gene Collection (MGC).</title>
        <authorList>
            <consortium name="The MGC Project Team"/>
        </authorList>
    </citation>
    <scope>NUCLEOTIDE SEQUENCE [LARGE SCALE MRNA]</scope>
    <source>
        <strain>FVB/N-3</strain>
        <tissue>Mammary gland</tissue>
    </source>
</reference>
<reference key="3">
    <citation type="journal article" date="2010" name="Cell">
        <title>A tissue-specific atlas of mouse protein phosphorylation and expression.</title>
        <authorList>
            <person name="Huttlin E.L."/>
            <person name="Jedrychowski M.P."/>
            <person name="Elias J.E."/>
            <person name="Goswami T."/>
            <person name="Rad R."/>
            <person name="Beausoleil S.A."/>
            <person name="Villen J."/>
            <person name="Haas W."/>
            <person name="Sowa M.E."/>
            <person name="Gygi S.P."/>
        </authorList>
    </citation>
    <scope>PHOSPHORYLATION [LARGE SCALE ANALYSIS] AT SER-626; SER-634; SER-653 AND THR-660</scope>
    <scope>IDENTIFICATION BY MASS SPECTROMETRY [LARGE SCALE ANALYSIS]</scope>
    <source>
        <tissue>Brown adipose tissue</tissue>
        <tissue>Heart</tissue>
        <tissue>Kidney</tissue>
        <tissue>Lung</tissue>
        <tissue>Spleen</tissue>
        <tissue>Testis</tissue>
    </source>
</reference>
<reference key="4">
    <citation type="journal article" date="2014" name="Mol. Cell. Proteomics">
        <title>Immunoaffinity enrichment and mass spectrometry analysis of protein methylation.</title>
        <authorList>
            <person name="Guo A."/>
            <person name="Gu H."/>
            <person name="Zhou J."/>
            <person name="Mulhern D."/>
            <person name="Wang Y."/>
            <person name="Lee K.A."/>
            <person name="Yang V."/>
            <person name="Aguiar M."/>
            <person name="Kornhauser J."/>
            <person name="Jia X."/>
            <person name="Ren J."/>
            <person name="Beausoleil S.A."/>
            <person name="Silva J.C."/>
            <person name="Vemulapalli V."/>
            <person name="Bedford M.T."/>
            <person name="Comb M.J."/>
        </authorList>
    </citation>
    <scope>METHYLATION [LARGE SCALE ANALYSIS] AT ARG-524</scope>
    <scope>IDENTIFICATION BY MASS SPECTROMETRY [LARGE SCALE ANALYSIS]</scope>
    <source>
        <tissue>Embryo</tissue>
    </source>
</reference>
<comment type="function">
    <text evidence="1">The TFIID basal transcription factor complex plays a major role in the initiation of RNA polymerase II (Pol II)-dependent transcription. TFIID recognizes and binds promoters with or without a TATA box via its subunit TBP, a TATA-box-binding protein, and promotes assembly of the pre-initiation complex (PIC). The TFIID complex consists of TBP and TBP-associated factors (TAFs), including TAF1, TAF2, TAF3, TAF4, TAF5, TAF6, TAF7, TAF8, TAF9, TAF10, TAF11, TAF12 and TAF13. The TFIID complex structure can be divided into 3 modules TFIID-A, TFIID-B, and TFIID-C. TAF6 homodimer connects TFIID modules, forming a rigid core.</text>
</comment>
<comment type="subunit">
    <text evidence="1">Component of the TFIID basal transcription factor complex, composed of TATA-box-binding protein TBP, and a number of TBP-associated factors (TAFs), including TAF1, TAF2, TAF3, TAF4, TAF5, TAF6, TAF7, TAF8, TAF9, TAF10, TAF11, TAF12 and TAF13. Interacts directly with TBP, TAF1/TAFII250, TAF9/TAFII31 and TAF12/TAFII20. The TAF6/TAFII70-TAF9/TAFII31 heterodimer forms an octamer complex with the TAF4B/TFII105-TAF12/TFIID20 heterodimer. Component of some MLL1/MLL complex, at least composed of the core components KMT2A/MLL1, ASH2L, HCFC1/HCF1, WDR5 and RBBP5, as well as the facultative components BACC1, CHD8, E2F6, HSP70, INO80C, KANSL1, LAS1L, MAX, MCRS1, MGA, MYST1/MOF, PELP1, PHF20, PRP31, RING2, RUVB1/TIP49A, RUVB2/TIP49B, SENP3, TAF1, TAF4, TAF6, TAF7, TAF9 and TEX10. Also interacts with the GTFs, TFIIEalpha/GTF2E1 and TFIIFalpha/GTF2F1. Component of the TBP-free TAFII-histone acetylase complex (TFTC-HAT) (By similarity). Interacts with TP53/p53 (By similarity).</text>
</comment>
<comment type="subcellular location">
    <subcellularLocation>
        <location>Nucleus</location>
    </subcellularLocation>
</comment>
<comment type="similarity">
    <text evidence="4">Belongs to the TAF6 family.</text>
</comment>
<protein>
    <recommendedName>
        <fullName>Transcription initiation factor TFIID subunit 6</fullName>
    </recommendedName>
    <alternativeName>
        <fullName>Transcription initiation factor TFIID 70 kDa subunit</fullName>
        <shortName>TAF(II)70</shortName>
        <shortName>TAFII-70</shortName>
        <shortName>TAFII70</shortName>
    </alternativeName>
    <alternativeName>
        <fullName>Transcription initiation factor TFIID 80 kDa subunit</fullName>
        <shortName>TAF(II)80</shortName>
        <shortName>TAFII-80</shortName>
        <shortName>TAFII80</shortName>
    </alternativeName>
    <alternativeName>
        <fullName>p80</fullName>
    </alternativeName>
</protein>
<keyword id="KW-1017">Isopeptide bond</keyword>
<keyword id="KW-0488">Methylation</keyword>
<keyword id="KW-0539">Nucleus</keyword>
<keyword id="KW-0597">Phosphoprotein</keyword>
<keyword id="KW-1185">Reference proteome</keyword>
<keyword id="KW-0804">Transcription</keyword>
<keyword id="KW-0805">Transcription regulation</keyword>
<keyword id="KW-0832">Ubl conjugation</keyword>
<proteinExistence type="evidence at protein level"/>
<accession>Q62311</accession>